<feature type="chain" id="PRO_1000197788" description="Putative membrane protein insertion efficiency factor">
    <location>
        <begin position="1"/>
        <end position="80"/>
    </location>
</feature>
<feature type="region of interest" description="Disordered" evidence="2">
    <location>
        <begin position="61"/>
        <end position="80"/>
    </location>
</feature>
<feature type="compositionally biased region" description="Basic and acidic residues" evidence="2">
    <location>
        <begin position="62"/>
        <end position="80"/>
    </location>
</feature>
<name>YIDD_STRZJ</name>
<comment type="function">
    <text evidence="1">Could be involved in insertion of integral membrane proteins into the membrane.</text>
</comment>
<comment type="subcellular location">
    <subcellularLocation>
        <location evidence="1">Cell membrane</location>
        <topology evidence="1">Peripheral membrane protein</topology>
        <orientation evidence="1">Cytoplasmic side</orientation>
    </subcellularLocation>
</comment>
<comment type="similarity">
    <text evidence="1">Belongs to the UPF0161 family.</text>
</comment>
<dbReference type="EMBL" id="CP000919">
    <property type="protein sequence ID" value="ACO19954.1"/>
    <property type="molecule type" value="Genomic_DNA"/>
</dbReference>
<dbReference type="KEGG" id="sjj:SPJ_1778"/>
<dbReference type="HOGENOM" id="CLU_144811_5_2_9"/>
<dbReference type="Proteomes" id="UP000002206">
    <property type="component" value="Chromosome"/>
</dbReference>
<dbReference type="GO" id="GO:0005886">
    <property type="term" value="C:plasma membrane"/>
    <property type="evidence" value="ECO:0007669"/>
    <property type="project" value="UniProtKB-SubCell"/>
</dbReference>
<dbReference type="HAMAP" id="MF_00386">
    <property type="entry name" value="UPF0161_YidD"/>
    <property type="match status" value="1"/>
</dbReference>
<dbReference type="InterPro" id="IPR002696">
    <property type="entry name" value="Membr_insert_effic_factor_YidD"/>
</dbReference>
<dbReference type="NCBIfam" id="TIGR00278">
    <property type="entry name" value="membrane protein insertion efficiency factor YidD"/>
    <property type="match status" value="1"/>
</dbReference>
<dbReference type="PANTHER" id="PTHR33383">
    <property type="entry name" value="MEMBRANE PROTEIN INSERTION EFFICIENCY FACTOR-RELATED"/>
    <property type="match status" value="1"/>
</dbReference>
<dbReference type="PANTHER" id="PTHR33383:SF1">
    <property type="entry name" value="MEMBRANE PROTEIN INSERTION EFFICIENCY FACTOR-RELATED"/>
    <property type="match status" value="1"/>
</dbReference>
<dbReference type="Pfam" id="PF01809">
    <property type="entry name" value="YidD"/>
    <property type="match status" value="1"/>
</dbReference>
<dbReference type="SMART" id="SM01234">
    <property type="entry name" value="Haemolytic"/>
    <property type="match status" value="1"/>
</dbReference>
<accession>C1CG97</accession>
<gene>
    <name type="ordered locus">SPJ_1778</name>
</gene>
<sequence length="80" mass="9320">MKRILIAPVRFYQRFISPVFPPSCRFELTCSNYMIQAIEKHGFKGVLMGLARILRCHPWSKTGKDPVPDHFSLKRNQEGE</sequence>
<organism>
    <name type="scientific">Streptococcus pneumoniae (strain JJA)</name>
    <dbReference type="NCBI Taxonomy" id="488222"/>
    <lineage>
        <taxon>Bacteria</taxon>
        <taxon>Bacillati</taxon>
        <taxon>Bacillota</taxon>
        <taxon>Bacilli</taxon>
        <taxon>Lactobacillales</taxon>
        <taxon>Streptococcaceae</taxon>
        <taxon>Streptococcus</taxon>
    </lineage>
</organism>
<keyword id="KW-1003">Cell membrane</keyword>
<keyword id="KW-0472">Membrane</keyword>
<reference key="1">
    <citation type="journal article" date="2010" name="Genome Biol.">
        <title>Structure and dynamics of the pan-genome of Streptococcus pneumoniae and closely related species.</title>
        <authorList>
            <person name="Donati C."/>
            <person name="Hiller N.L."/>
            <person name="Tettelin H."/>
            <person name="Muzzi A."/>
            <person name="Croucher N.J."/>
            <person name="Angiuoli S.V."/>
            <person name="Oggioni M."/>
            <person name="Dunning Hotopp J.C."/>
            <person name="Hu F.Z."/>
            <person name="Riley D.R."/>
            <person name="Covacci A."/>
            <person name="Mitchell T.J."/>
            <person name="Bentley S.D."/>
            <person name="Kilian M."/>
            <person name="Ehrlich G.D."/>
            <person name="Rappuoli R."/>
            <person name="Moxon E.R."/>
            <person name="Masignani V."/>
        </authorList>
    </citation>
    <scope>NUCLEOTIDE SEQUENCE [LARGE SCALE GENOMIC DNA]</scope>
    <source>
        <strain>JJA</strain>
    </source>
</reference>
<evidence type="ECO:0000255" key="1">
    <source>
        <dbReference type="HAMAP-Rule" id="MF_00386"/>
    </source>
</evidence>
<evidence type="ECO:0000256" key="2">
    <source>
        <dbReference type="SAM" id="MobiDB-lite"/>
    </source>
</evidence>
<protein>
    <recommendedName>
        <fullName evidence="1">Putative membrane protein insertion efficiency factor</fullName>
    </recommendedName>
</protein>
<proteinExistence type="inferred from homology"/>